<protein>
    <recommendedName>
        <fullName evidence="1">Ribosomal RNA small subunit methyltransferase H</fullName>
        <ecNumber evidence="1">2.1.1.199</ecNumber>
    </recommendedName>
    <alternativeName>
        <fullName evidence="1">16S rRNA m(4)C1402 methyltransferase</fullName>
    </alternativeName>
    <alternativeName>
        <fullName evidence="1">rRNA (cytosine-N(4)-)-methyltransferase RsmH</fullName>
    </alternativeName>
</protein>
<sequence>MNQTIKHISVMKKELIESLKIKKNGIYIDGTFGMGGHALSILKTIGREGRLYAIDRDPNSVFIGNQIKDKRFHIIHSNFSKILNYAKYNNIIGKVNGILFDLGTSSLQIENEKRGFSFKKNGPLDMRMNPHAGISASEWLFKSDINKIYFVLKNFGEERFSKRIAYAIKDYCKKKKINNTFELVDIIKKATPIKNKFKHPAKRTFQAIRIYINQELEEIKKGLENSLKILKPGGRLSIISFHSLEDRIVKNFMMKYSKKATVPYGLPITENKLETLRICKLKIINRIFPTQKEIEKNPRARSSVLRTAELKE</sequence>
<gene>
    <name evidence="1" type="primary">rsmH</name>
    <name type="synonym">mraW</name>
    <name type="ordered locus">BUsg_218</name>
</gene>
<feature type="chain" id="PRO_0000108594" description="Ribosomal RNA small subunit methyltransferase H">
    <location>
        <begin position="1"/>
        <end position="312"/>
    </location>
</feature>
<feature type="binding site" evidence="1">
    <location>
        <begin position="35"/>
        <end position="37"/>
    </location>
    <ligand>
        <name>S-adenosyl-L-methionine</name>
        <dbReference type="ChEBI" id="CHEBI:59789"/>
    </ligand>
</feature>
<feature type="binding site" evidence="1">
    <location>
        <position position="55"/>
    </location>
    <ligand>
        <name>S-adenosyl-L-methionine</name>
        <dbReference type="ChEBI" id="CHEBI:59789"/>
    </ligand>
</feature>
<feature type="binding site" evidence="1">
    <location>
        <position position="79"/>
    </location>
    <ligand>
        <name>S-adenosyl-L-methionine</name>
        <dbReference type="ChEBI" id="CHEBI:59789"/>
    </ligand>
</feature>
<feature type="binding site" evidence="1">
    <location>
        <position position="101"/>
    </location>
    <ligand>
        <name>S-adenosyl-L-methionine</name>
        <dbReference type="ChEBI" id="CHEBI:59789"/>
    </ligand>
</feature>
<feature type="binding site" evidence="1">
    <location>
        <position position="108"/>
    </location>
    <ligand>
        <name>S-adenosyl-L-methionine</name>
        <dbReference type="ChEBI" id="CHEBI:59789"/>
    </ligand>
</feature>
<organism>
    <name type="scientific">Buchnera aphidicola subsp. Schizaphis graminum (strain Sg)</name>
    <dbReference type="NCBI Taxonomy" id="198804"/>
    <lineage>
        <taxon>Bacteria</taxon>
        <taxon>Pseudomonadati</taxon>
        <taxon>Pseudomonadota</taxon>
        <taxon>Gammaproteobacteria</taxon>
        <taxon>Enterobacterales</taxon>
        <taxon>Erwiniaceae</taxon>
        <taxon>Buchnera</taxon>
    </lineage>
</organism>
<comment type="function">
    <text evidence="1">Specifically methylates the N4 position of cytidine in position 1402 (C1402) of 16S rRNA.</text>
</comment>
<comment type="catalytic activity">
    <reaction evidence="1">
        <text>cytidine(1402) in 16S rRNA + S-adenosyl-L-methionine = N(4)-methylcytidine(1402) in 16S rRNA + S-adenosyl-L-homocysteine + H(+)</text>
        <dbReference type="Rhea" id="RHEA:42928"/>
        <dbReference type="Rhea" id="RHEA-COMP:10286"/>
        <dbReference type="Rhea" id="RHEA-COMP:10287"/>
        <dbReference type="ChEBI" id="CHEBI:15378"/>
        <dbReference type="ChEBI" id="CHEBI:57856"/>
        <dbReference type="ChEBI" id="CHEBI:59789"/>
        <dbReference type="ChEBI" id="CHEBI:74506"/>
        <dbReference type="ChEBI" id="CHEBI:82748"/>
        <dbReference type="EC" id="2.1.1.199"/>
    </reaction>
</comment>
<comment type="subcellular location">
    <subcellularLocation>
        <location evidence="1">Cytoplasm</location>
    </subcellularLocation>
</comment>
<comment type="similarity">
    <text evidence="1">Belongs to the methyltransferase superfamily. RsmH family.</text>
</comment>
<evidence type="ECO:0000255" key="1">
    <source>
        <dbReference type="HAMAP-Rule" id="MF_01007"/>
    </source>
</evidence>
<keyword id="KW-0963">Cytoplasm</keyword>
<keyword id="KW-0489">Methyltransferase</keyword>
<keyword id="KW-0698">rRNA processing</keyword>
<keyword id="KW-0949">S-adenosyl-L-methionine</keyword>
<keyword id="KW-0808">Transferase</keyword>
<name>RSMH_BUCAP</name>
<reference key="1">
    <citation type="journal article" date="1998" name="Curr. Microbiol.">
        <title>Sequence analysis of a DNA fragment from Buchnera aphidicola (Aphid endosymbiont) containing the genes dapD-htrA-ilvI-ilvH-ftsL-ftsI-murE.</title>
        <authorList>
            <person name="Thao M.L."/>
            <person name="Baumann P."/>
        </authorList>
    </citation>
    <scope>NUCLEOTIDE SEQUENCE [GENOMIC DNA]</scope>
</reference>
<reference key="2">
    <citation type="journal article" date="2002" name="Science">
        <title>50 million years of genomic stasis in endosymbiotic bacteria.</title>
        <authorList>
            <person name="Tamas I."/>
            <person name="Klasson L."/>
            <person name="Canbaeck B."/>
            <person name="Naeslund A.K."/>
            <person name="Eriksson A.-S."/>
            <person name="Wernegreen J.J."/>
            <person name="Sandstroem J.P."/>
            <person name="Moran N.A."/>
            <person name="Andersson S.G.E."/>
        </authorList>
    </citation>
    <scope>NUCLEOTIDE SEQUENCE [LARGE SCALE GENOMIC DNA]</scope>
    <source>
        <strain>Sg</strain>
    </source>
</reference>
<dbReference type="EC" id="2.1.1.199" evidence="1"/>
<dbReference type="EMBL" id="AF060492">
    <property type="protein sequence ID" value="AAC32335.1"/>
    <property type="molecule type" value="Genomic_DNA"/>
</dbReference>
<dbReference type="EMBL" id="AE013218">
    <property type="protein sequence ID" value="AAM67778.1"/>
    <property type="molecule type" value="Genomic_DNA"/>
</dbReference>
<dbReference type="RefSeq" id="WP_011053745.1">
    <property type="nucleotide sequence ID" value="NC_004061.1"/>
</dbReference>
<dbReference type="SMR" id="O85295"/>
<dbReference type="STRING" id="198804.BUsg_218"/>
<dbReference type="GeneID" id="93003684"/>
<dbReference type="KEGG" id="bas:BUsg_218"/>
<dbReference type="eggNOG" id="COG0275">
    <property type="taxonomic scope" value="Bacteria"/>
</dbReference>
<dbReference type="HOGENOM" id="CLU_038422_2_0_6"/>
<dbReference type="Proteomes" id="UP000000416">
    <property type="component" value="Chromosome"/>
</dbReference>
<dbReference type="GO" id="GO:0005737">
    <property type="term" value="C:cytoplasm"/>
    <property type="evidence" value="ECO:0007669"/>
    <property type="project" value="UniProtKB-SubCell"/>
</dbReference>
<dbReference type="GO" id="GO:0071424">
    <property type="term" value="F:rRNA (cytosine-N4-)-methyltransferase activity"/>
    <property type="evidence" value="ECO:0007669"/>
    <property type="project" value="UniProtKB-UniRule"/>
</dbReference>
<dbReference type="GO" id="GO:0070475">
    <property type="term" value="P:rRNA base methylation"/>
    <property type="evidence" value="ECO:0007669"/>
    <property type="project" value="UniProtKB-UniRule"/>
</dbReference>
<dbReference type="Gene3D" id="1.10.150.170">
    <property type="entry name" value="Putative methyltransferase TM0872, insert domain"/>
    <property type="match status" value="1"/>
</dbReference>
<dbReference type="Gene3D" id="3.40.50.150">
    <property type="entry name" value="Vaccinia Virus protein VP39"/>
    <property type="match status" value="1"/>
</dbReference>
<dbReference type="HAMAP" id="MF_01007">
    <property type="entry name" value="16SrRNA_methyltr_H"/>
    <property type="match status" value="1"/>
</dbReference>
<dbReference type="InterPro" id="IPR002903">
    <property type="entry name" value="RsmH"/>
</dbReference>
<dbReference type="InterPro" id="IPR023397">
    <property type="entry name" value="SAM-dep_MeTrfase_MraW_recog"/>
</dbReference>
<dbReference type="InterPro" id="IPR029063">
    <property type="entry name" value="SAM-dependent_MTases_sf"/>
</dbReference>
<dbReference type="NCBIfam" id="TIGR00006">
    <property type="entry name" value="16S rRNA (cytosine(1402)-N(4))-methyltransferase RsmH"/>
    <property type="match status" value="1"/>
</dbReference>
<dbReference type="PANTHER" id="PTHR11265:SF0">
    <property type="entry name" value="12S RRNA N4-METHYLCYTIDINE METHYLTRANSFERASE"/>
    <property type="match status" value="1"/>
</dbReference>
<dbReference type="PANTHER" id="PTHR11265">
    <property type="entry name" value="S-ADENOSYL-METHYLTRANSFERASE MRAW"/>
    <property type="match status" value="1"/>
</dbReference>
<dbReference type="Pfam" id="PF01795">
    <property type="entry name" value="Methyltransf_5"/>
    <property type="match status" value="1"/>
</dbReference>
<dbReference type="PIRSF" id="PIRSF004486">
    <property type="entry name" value="MraW"/>
    <property type="match status" value="1"/>
</dbReference>
<dbReference type="SUPFAM" id="SSF81799">
    <property type="entry name" value="Putative methyltransferase TM0872, insert domain"/>
    <property type="match status" value="1"/>
</dbReference>
<dbReference type="SUPFAM" id="SSF53335">
    <property type="entry name" value="S-adenosyl-L-methionine-dependent methyltransferases"/>
    <property type="match status" value="1"/>
</dbReference>
<accession>O85295</accession>
<proteinExistence type="inferred from homology"/>